<organism>
    <name type="scientific">Escherichia coli O7:K1 (strain IAI39 / ExPEC)</name>
    <dbReference type="NCBI Taxonomy" id="585057"/>
    <lineage>
        <taxon>Bacteria</taxon>
        <taxon>Pseudomonadati</taxon>
        <taxon>Pseudomonadota</taxon>
        <taxon>Gammaproteobacteria</taxon>
        <taxon>Enterobacterales</taxon>
        <taxon>Enterobacteriaceae</taxon>
        <taxon>Escherichia</taxon>
    </lineage>
</organism>
<proteinExistence type="inferred from homology"/>
<reference key="1">
    <citation type="journal article" date="2009" name="PLoS Genet.">
        <title>Organised genome dynamics in the Escherichia coli species results in highly diverse adaptive paths.</title>
        <authorList>
            <person name="Touchon M."/>
            <person name="Hoede C."/>
            <person name="Tenaillon O."/>
            <person name="Barbe V."/>
            <person name="Baeriswyl S."/>
            <person name="Bidet P."/>
            <person name="Bingen E."/>
            <person name="Bonacorsi S."/>
            <person name="Bouchier C."/>
            <person name="Bouvet O."/>
            <person name="Calteau A."/>
            <person name="Chiapello H."/>
            <person name="Clermont O."/>
            <person name="Cruveiller S."/>
            <person name="Danchin A."/>
            <person name="Diard M."/>
            <person name="Dossat C."/>
            <person name="Karoui M.E."/>
            <person name="Frapy E."/>
            <person name="Garry L."/>
            <person name="Ghigo J.M."/>
            <person name="Gilles A.M."/>
            <person name="Johnson J."/>
            <person name="Le Bouguenec C."/>
            <person name="Lescat M."/>
            <person name="Mangenot S."/>
            <person name="Martinez-Jehanne V."/>
            <person name="Matic I."/>
            <person name="Nassif X."/>
            <person name="Oztas S."/>
            <person name="Petit M.A."/>
            <person name="Pichon C."/>
            <person name="Rouy Z."/>
            <person name="Ruf C.S."/>
            <person name="Schneider D."/>
            <person name="Tourret J."/>
            <person name="Vacherie B."/>
            <person name="Vallenet D."/>
            <person name="Medigue C."/>
            <person name="Rocha E.P.C."/>
            <person name="Denamur E."/>
        </authorList>
    </citation>
    <scope>NUCLEOTIDE SEQUENCE [LARGE SCALE GENOMIC DNA]</scope>
    <source>
        <strain>IAI39 / ExPEC</strain>
    </source>
</reference>
<accession>B7NIC3</accession>
<feature type="chain" id="PRO_1000116439" description="Deoxyguanosinetriphosphate triphosphohydrolase">
    <location>
        <begin position="1"/>
        <end position="505"/>
    </location>
</feature>
<feature type="domain" description="HD" evidence="2">
    <location>
        <begin position="66"/>
        <end position="273"/>
    </location>
</feature>
<comment type="function">
    <text evidence="1">dGTPase preferentially hydrolyzes dGTP over the other canonical NTPs.</text>
</comment>
<comment type="catalytic activity">
    <reaction evidence="1">
        <text>dGTP + H2O = 2'-deoxyguanosine + triphosphate + H(+)</text>
        <dbReference type="Rhea" id="RHEA:15193"/>
        <dbReference type="ChEBI" id="CHEBI:15377"/>
        <dbReference type="ChEBI" id="CHEBI:15378"/>
        <dbReference type="ChEBI" id="CHEBI:17172"/>
        <dbReference type="ChEBI" id="CHEBI:18036"/>
        <dbReference type="ChEBI" id="CHEBI:61429"/>
        <dbReference type="EC" id="3.1.5.1"/>
    </reaction>
</comment>
<comment type="cofactor">
    <cofactor evidence="1">
        <name>Mg(2+)</name>
        <dbReference type="ChEBI" id="CHEBI:18420"/>
    </cofactor>
</comment>
<comment type="subunit">
    <text evidence="1">Homotetramer.</text>
</comment>
<comment type="similarity">
    <text evidence="1">Belongs to the dGTPase family. Type 1 subfamily.</text>
</comment>
<sequence>MAQIDFRKKINWHRRYRSPQGVKTEHEILRIFESDRGRIINSPAIRRLQQKTQVFPLERNAAVRTRLTHSMEVQQVGRYIAKEILSRLKELKLLEAYGLDELTGPFESIVEMSCLMHDIGNPPFGHFGEAAINDWFRQRLHPEDAESQPLTDDRCSVAALRLRDGEEPLNELRRKIRQDLCHFEGNAQGIRLVHTLMRMNLTWAQVGGILKYTRPAWWRGETPETHHYLMKKPGYYLSEEAYIARLRKELNLALYSRFPLTWIMEAADDISYCVADLEDAVEKRIFTVEQLYHHLHEAWGQHEKGSLFSLVVENAWEKSRSNSLSRSTEDQFFMYLRVNTLNKLVPYAAQRFIDNLPAIFAGTFNHALLEDASECSDLLKLYKNVAVKHVFSHPDVEQLELQGYRVISGLLEIYRPLLSLSLSDFTELVEKERVKRFPIESRLFHKLSTRHRLAYVEAVSKLPSDSPEFPLWEYYYRCRLLQDYISGMTDLYAWDEYRRLMAVEQ</sequence>
<dbReference type="EC" id="3.1.5.1" evidence="1"/>
<dbReference type="EMBL" id="CU928164">
    <property type="protein sequence ID" value="CAR16304.1"/>
    <property type="molecule type" value="Genomic_DNA"/>
</dbReference>
<dbReference type="RefSeq" id="WP_000057067.1">
    <property type="nucleotide sequence ID" value="NC_011750.1"/>
</dbReference>
<dbReference type="RefSeq" id="YP_002406210.1">
    <property type="nucleotide sequence ID" value="NC_011750.1"/>
</dbReference>
<dbReference type="SMR" id="B7NIC3"/>
<dbReference type="STRING" id="585057.ECIAI39_0164"/>
<dbReference type="KEGG" id="ect:ECIAI39_0164"/>
<dbReference type="PATRIC" id="fig|585057.6.peg.177"/>
<dbReference type="HOGENOM" id="CLU_028163_2_1_6"/>
<dbReference type="Proteomes" id="UP000000749">
    <property type="component" value="Chromosome"/>
</dbReference>
<dbReference type="GO" id="GO:0008832">
    <property type="term" value="F:dGTPase activity"/>
    <property type="evidence" value="ECO:0007669"/>
    <property type="project" value="UniProtKB-UniRule"/>
</dbReference>
<dbReference type="GO" id="GO:0000287">
    <property type="term" value="F:magnesium ion binding"/>
    <property type="evidence" value="ECO:0007669"/>
    <property type="project" value="UniProtKB-UniRule"/>
</dbReference>
<dbReference type="GO" id="GO:0006203">
    <property type="term" value="P:dGTP catabolic process"/>
    <property type="evidence" value="ECO:0007669"/>
    <property type="project" value="InterPro"/>
</dbReference>
<dbReference type="CDD" id="cd00077">
    <property type="entry name" value="HDc"/>
    <property type="match status" value="1"/>
</dbReference>
<dbReference type="FunFam" id="1.10.3210.10:FF:000009">
    <property type="entry name" value="Deoxyguanosinetriphosphate triphosphohydrolase"/>
    <property type="match status" value="1"/>
</dbReference>
<dbReference type="FunFam" id="1.10.3210.10:FF:000010">
    <property type="entry name" value="Deoxyguanosinetriphosphate triphosphohydrolase"/>
    <property type="match status" value="1"/>
</dbReference>
<dbReference type="FunFam" id="1.10.3410.10:FF:000001">
    <property type="entry name" value="Deoxyguanosinetriphosphate triphosphohydrolase"/>
    <property type="match status" value="1"/>
</dbReference>
<dbReference type="Gene3D" id="1.10.3210.10">
    <property type="entry name" value="Hypothetical protein af1432"/>
    <property type="match status" value="2"/>
</dbReference>
<dbReference type="Gene3D" id="1.10.3410.10">
    <property type="entry name" value="putative deoxyguanosinetriphosphate triphosphohydrolase like domain"/>
    <property type="match status" value="1"/>
</dbReference>
<dbReference type="HAMAP" id="MF_00030">
    <property type="entry name" value="dGTPase_type1"/>
    <property type="match status" value="1"/>
</dbReference>
<dbReference type="InterPro" id="IPR023293">
    <property type="entry name" value="dGTP_triP_hydro_central_sf"/>
</dbReference>
<dbReference type="InterPro" id="IPR006261">
    <property type="entry name" value="dGTPase"/>
</dbReference>
<dbReference type="InterPro" id="IPR050135">
    <property type="entry name" value="dGTPase-like"/>
</dbReference>
<dbReference type="InterPro" id="IPR020779">
    <property type="entry name" value="dNTPase_1"/>
</dbReference>
<dbReference type="InterPro" id="IPR003607">
    <property type="entry name" value="HD/PDEase_dom"/>
</dbReference>
<dbReference type="InterPro" id="IPR006674">
    <property type="entry name" value="HD_domain"/>
</dbReference>
<dbReference type="NCBIfam" id="TIGR01353">
    <property type="entry name" value="dGTP_triPase"/>
    <property type="match status" value="1"/>
</dbReference>
<dbReference type="NCBIfam" id="NF003429">
    <property type="entry name" value="PRK04926.1"/>
    <property type="match status" value="1"/>
</dbReference>
<dbReference type="PANTHER" id="PTHR11373:SF32">
    <property type="entry name" value="DEOXYGUANOSINETRIPHOSPHATE TRIPHOSPHOHYDROLASE"/>
    <property type="match status" value="1"/>
</dbReference>
<dbReference type="PANTHER" id="PTHR11373">
    <property type="entry name" value="DEOXYNUCLEOSIDE TRIPHOSPHATE TRIPHOSPHOHYDROLASE"/>
    <property type="match status" value="1"/>
</dbReference>
<dbReference type="Pfam" id="PF01966">
    <property type="entry name" value="HD"/>
    <property type="match status" value="1"/>
</dbReference>
<dbReference type="SMART" id="SM00471">
    <property type="entry name" value="HDc"/>
    <property type="match status" value="1"/>
</dbReference>
<dbReference type="SUPFAM" id="SSF109604">
    <property type="entry name" value="HD-domain/PDEase-like"/>
    <property type="match status" value="1"/>
</dbReference>
<dbReference type="PROSITE" id="PS51831">
    <property type="entry name" value="HD"/>
    <property type="match status" value="1"/>
</dbReference>
<keyword id="KW-0378">Hydrolase</keyword>
<keyword id="KW-0460">Magnesium</keyword>
<protein>
    <recommendedName>
        <fullName evidence="1">Deoxyguanosinetriphosphate triphosphohydrolase</fullName>
        <shortName evidence="1">dGTP triphosphohydrolase</shortName>
        <shortName evidence="1">dGTPase</shortName>
        <ecNumber evidence="1">3.1.5.1</ecNumber>
    </recommendedName>
</protein>
<gene>
    <name evidence="1" type="primary">dgt</name>
    <name type="ordered locus">ECIAI39_0164</name>
</gene>
<evidence type="ECO:0000255" key="1">
    <source>
        <dbReference type="HAMAP-Rule" id="MF_00030"/>
    </source>
</evidence>
<evidence type="ECO:0000255" key="2">
    <source>
        <dbReference type="PROSITE-ProRule" id="PRU01175"/>
    </source>
</evidence>
<name>DGTP_ECO7I</name>